<proteinExistence type="evidence at protein level"/>
<sequence length="339" mass="38988">MGTITVVINEGPILLIRALHRATTNKKMFRSTVWRRFASTGEIAKAKLDEFLIYHKTDAKLKPFIYRPKNAQILLTKDIRDPKTREPLQPRPPVKPLSKQTLNDFIYSVEPNSTELLDWFKEWTGTSIRKRAIWTYISPIHVQKMLTASFFKIGKYAHMVGLLYGIEHKFLKAQNPSVFDIEHFFNTNIMCALHRNRLKDYKDAEIAQRKLQVAWKKVLNRKNNTGLANILVATLGRQIGFTPELTGLQPVDISLPDIPNSSSGAELKDLLSKYEGIYLIARTLLDIDQHNAQYLELQEFIRQYQNALSESSDPYDTHLKALGLLETPPPQESTEKEEK</sequence>
<accession>P12686</accession>
<accession>D6VUL6</accession>
<name>RT13_YEAST</name>
<reference key="1">
    <citation type="journal article" date="1988" name="Mol. Cell. Biol.">
        <title>Structure and regulation of a nuclear gene in Saccharomyces cerevisiae that specifies MRP13, a protein of the small subunit of the mitochondrial ribosome.</title>
        <authorList>
            <person name="Partaledis J.A."/>
            <person name="Mason T.L."/>
        </authorList>
    </citation>
    <scope>NUCLEOTIDE SEQUENCE [GENOMIC DNA]</scope>
</reference>
<reference key="2">
    <citation type="journal article" date="1997" name="Nature">
        <title>The nucleotide sequence of Saccharomyces cerevisiae chromosome VII.</title>
        <authorList>
            <person name="Tettelin H."/>
            <person name="Agostoni-Carbone M.L."/>
            <person name="Albermann K."/>
            <person name="Albers M."/>
            <person name="Arroyo J."/>
            <person name="Backes U."/>
            <person name="Barreiros T."/>
            <person name="Bertani I."/>
            <person name="Bjourson A.J."/>
            <person name="Brueckner M."/>
            <person name="Bruschi C.V."/>
            <person name="Carignani G."/>
            <person name="Castagnoli L."/>
            <person name="Cerdan E."/>
            <person name="Clemente M.L."/>
            <person name="Coblenz A."/>
            <person name="Coglievina M."/>
            <person name="Coissac E."/>
            <person name="Defoor E."/>
            <person name="Del Bino S."/>
            <person name="Delius H."/>
            <person name="Delneri D."/>
            <person name="de Wergifosse P."/>
            <person name="Dujon B."/>
            <person name="Durand P."/>
            <person name="Entian K.-D."/>
            <person name="Eraso P."/>
            <person name="Escribano V."/>
            <person name="Fabiani L."/>
            <person name="Fartmann B."/>
            <person name="Feroli F."/>
            <person name="Feuermann M."/>
            <person name="Frontali L."/>
            <person name="Garcia-Gonzalez M."/>
            <person name="Garcia-Saez M.I."/>
            <person name="Goffeau A."/>
            <person name="Guerreiro P."/>
            <person name="Hani J."/>
            <person name="Hansen M."/>
            <person name="Hebling U."/>
            <person name="Hernandez K."/>
            <person name="Heumann K."/>
            <person name="Hilger F."/>
            <person name="Hofmann B."/>
            <person name="Indge K.J."/>
            <person name="James C.M."/>
            <person name="Klima R."/>
            <person name="Koetter P."/>
            <person name="Kramer B."/>
            <person name="Kramer W."/>
            <person name="Lauquin G."/>
            <person name="Leuther H."/>
            <person name="Louis E.J."/>
            <person name="Maillier E."/>
            <person name="Marconi A."/>
            <person name="Martegani E."/>
            <person name="Mazon M.J."/>
            <person name="Mazzoni C."/>
            <person name="McReynolds A.D.K."/>
            <person name="Melchioretto P."/>
            <person name="Mewes H.-W."/>
            <person name="Minenkova O."/>
            <person name="Mueller-Auer S."/>
            <person name="Nawrocki A."/>
            <person name="Netter P."/>
            <person name="Neu R."/>
            <person name="Nombela C."/>
            <person name="Oliver S.G."/>
            <person name="Panzeri L."/>
            <person name="Paoluzi S."/>
            <person name="Plevani P."/>
            <person name="Portetelle D."/>
            <person name="Portillo F."/>
            <person name="Potier S."/>
            <person name="Purnelle B."/>
            <person name="Rieger M."/>
            <person name="Riles L."/>
            <person name="Rinaldi T."/>
            <person name="Robben J."/>
            <person name="Rodrigues-Pousada C."/>
            <person name="Rodriguez-Belmonte E."/>
            <person name="Rodriguez-Torres A.M."/>
            <person name="Rose M."/>
            <person name="Ruzzi M."/>
            <person name="Saliola M."/>
            <person name="Sanchez-Perez M."/>
            <person name="Schaefer B."/>
            <person name="Schaefer M."/>
            <person name="Scharfe M."/>
            <person name="Schmidheini T."/>
            <person name="Schreer A."/>
            <person name="Skala J."/>
            <person name="Souciet J.-L."/>
            <person name="Steensma H.Y."/>
            <person name="Talla E."/>
            <person name="Thierry A."/>
            <person name="Vandenbol M."/>
            <person name="van der Aart Q.J.M."/>
            <person name="Van Dyck L."/>
            <person name="Vanoni M."/>
            <person name="Verhasselt P."/>
            <person name="Voet M."/>
            <person name="Volckaert G."/>
            <person name="Wambutt R."/>
            <person name="Watson M.D."/>
            <person name="Weber N."/>
            <person name="Wedler E."/>
            <person name="Wedler H."/>
            <person name="Wipfli P."/>
            <person name="Wolf K."/>
            <person name="Wright L.F."/>
            <person name="Zaccaria P."/>
            <person name="Zimmermann M."/>
            <person name="Zollner A."/>
            <person name="Kleine K."/>
        </authorList>
    </citation>
    <scope>NUCLEOTIDE SEQUENCE [LARGE SCALE GENOMIC DNA]</scope>
    <source>
        <strain>ATCC 204508 / S288c</strain>
    </source>
</reference>
<reference key="3">
    <citation type="journal article" date="2014" name="G3 (Bethesda)">
        <title>The reference genome sequence of Saccharomyces cerevisiae: Then and now.</title>
        <authorList>
            <person name="Engel S.R."/>
            <person name="Dietrich F.S."/>
            <person name="Fisk D.G."/>
            <person name="Binkley G."/>
            <person name="Balakrishnan R."/>
            <person name="Costanzo M.C."/>
            <person name="Dwight S.S."/>
            <person name="Hitz B.C."/>
            <person name="Karra K."/>
            <person name="Nash R.S."/>
            <person name="Weng S."/>
            <person name="Wong E.D."/>
            <person name="Lloyd P."/>
            <person name="Skrzypek M.S."/>
            <person name="Miyasato S.R."/>
            <person name="Simison M."/>
            <person name="Cherry J.M."/>
        </authorList>
    </citation>
    <scope>GENOME REANNOTATION</scope>
    <source>
        <strain>ATCC 204508 / S288c</strain>
    </source>
</reference>
<reference key="4">
    <citation type="journal article" date="1997" name="Eur. J. Biochem.">
        <title>Identification and characterization of the genes for mitochondrial ribosomal proteins of Saccharomyces cerevisiae.</title>
        <authorList>
            <person name="Kitakawa M."/>
            <person name="Graack H.-R."/>
            <person name="Grohmann L."/>
            <person name="Goldschmidt-Reisin S."/>
            <person name="Herfurth E."/>
            <person name="Wittmann-Liebold B."/>
            <person name="Nishimura T."/>
            <person name="Isono K."/>
        </authorList>
    </citation>
    <scope>PROTEIN SEQUENCE OF 38-51</scope>
    <scope>SUBUNIT</scope>
    <source>
        <strain>07173</strain>
    </source>
</reference>
<reference key="5">
    <citation type="journal article" date="2002" name="Eur. J. Biochem.">
        <title>Tag-mediated isolation of yeast mitochondrial ribosome and mass spectrometric identification of its new components.</title>
        <authorList>
            <person name="Gan X."/>
            <person name="Kitakawa M."/>
            <person name="Yoshino K."/>
            <person name="Oshiro N."/>
            <person name="Yonezawa K."/>
            <person name="Isono K."/>
        </authorList>
    </citation>
    <scope>IDENTIFICATION IN THE MITOCHONDRIAL RIBOSOMAL SMALL COMPLEX</scope>
    <scope>IDENTIFICATION BY MASS SPECTROMETRY</scope>
</reference>
<reference key="6">
    <citation type="journal article" date="2003" name="Nature">
        <title>Global analysis of protein localization in budding yeast.</title>
        <authorList>
            <person name="Huh W.-K."/>
            <person name="Falvo J.V."/>
            <person name="Gerke L.C."/>
            <person name="Carroll A.S."/>
            <person name="Howson R.W."/>
            <person name="Weissman J.S."/>
            <person name="O'Shea E.K."/>
        </authorList>
    </citation>
    <scope>SUBCELLULAR LOCATION [LARGE SCALE ANALYSIS]</scope>
</reference>
<reference key="7">
    <citation type="journal article" date="2003" name="Nature">
        <title>Global analysis of protein expression in yeast.</title>
        <authorList>
            <person name="Ghaemmaghami S."/>
            <person name="Huh W.-K."/>
            <person name="Bower K."/>
            <person name="Howson R.W."/>
            <person name="Belle A."/>
            <person name="Dephoure N."/>
            <person name="O'Shea E.K."/>
            <person name="Weissman J.S."/>
        </authorList>
    </citation>
    <scope>LEVEL OF PROTEIN EXPRESSION [LARGE SCALE ANALYSIS]</scope>
</reference>
<reference key="8">
    <citation type="journal article" date="2003" name="Proc. Natl. Acad. Sci. U.S.A.">
        <title>The proteome of Saccharomyces cerevisiae mitochondria.</title>
        <authorList>
            <person name="Sickmann A."/>
            <person name="Reinders J."/>
            <person name="Wagner Y."/>
            <person name="Joppich C."/>
            <person name="Zahedi R.P."/>
            <person name="Meyer H.E."/>
            <person name="Schoenfisch B."/>
            <person name="Perschil I."/>
            <person name="Chacinska A."/>
            <person name="Guiard B."/>
            <person name="Rehling P."/>
            <person name="Pfanner N."/>
            <person name="Meisinger C."/>
        </authorList>
    </citation>
    <scope>SUBCELLULAR LOCATION [LARGE SCALE ANALYSIS]</scope>
    <source>
        <strain>ATCC 76625 / YPH499</strain>
    </source>
</reference>
<reference key="9">
    <citation type="journal article" date="2015" name="Nat. Commun.">
        <title>Organization of the mitochondrial translation machinery studied in situ by cryoelectron tomography.</title>
        <authorList>
            <person name="Pfeffer S."/>
            <person name="Woellhaf M.W."/>
            <person name="Herrmann J.M."/>
            <person name="Forster F."/>
        </authorList>
    </citation>
    <scope>SUBCELLULAR LOCATION</scope>
</reference>
<reference key="10">
    <citation type="journal article" date="2017" name="Science">
        <title>The structure of the yeast mitochondrial ribosome.</title>
        <authorList>
            <person name="Desai N."/>
            <person name="Brown A."/>
            <person name="Amunts A."/>
            <person name="Ramakrishnan V."/>
        </authorList>
    </citation>
    <scope>STRUCTURE BY ELECTRON MICROSCOPY (3.25 ANGSTROMS)</scope>
    <scope>SUBUNIT</scope>
</reference>
<feature type="transit peptide" description="Mitochondrion" evidence="7">
    <location>
        <begin position="1"/>
        <end position="37"/>
    </location>
</feature>
<feature type="chain" id="PRO_0000030585" description="Small ribosomal subunit protein mS27">
    <location>
        <begin position="38"/>
        <end position="339"/>
    </location>
</feature>
<feature type="sequence conflict" description="In Ref. 1; AAA34788." evidence="9" ref="1">
    <original>T</original>
    <variation>S</variation>
    <location>
        <position position="114"/>
    </location>
</feature>
<feature type="sequence conflict" description="In Ref. 1; AAA34788." evidence="9" ref="1">
    <original>PPPQEST</original>
    <variation>HSQDQ</variation>
    <location>
        <begin position="328"/>
        <end position="334"/>
    </location>
</feature>
<feature type="helix" evidence="13">
    <location>
        <begin position="42"/>
        <end position="56"/>
    </location>
</feature>
<feature type="turn" evidence="12">
    <location>
        <begin position="59"/>
        <end position="61"/>
    </location>
</feature>
<feature type="helix" evidence="13">
    <location>
        <begin position="62"/>
        <end position="66"/>
    </location>
</feature>
<feature type="helix" evidence="12">
    <location>
        <begin position="68"/>
        <end position="70"/>
    </location>
</feature>
<feature type="helix" evidence="13">
    <location>
        <begin position="71"/>
        <end position="75"/>
    </location>
</feature>
<feature type="helix" evidence="13">
    <location>
        <begin position="99"/>
        <end position="103"/>
    </location>
</feature>
<feature type="helix" evidence="13">
    <location>
        <begin position="104"/>
        <end position="107"/>
    </location>
</feature>
<feature type="helix" evidence="13">
    <location>
        <begin position="116"/>
        <end position="124"/>
    </location>
</feature>
<feature type="helix" evidence="13">
    <location>
        <begin position="131"/>
        <end position="136"/>
    </location>
</feature>
<feature type="helix" evidence="13">
    <location>
        <begin position="139"/>
        <end position="151"/>
    </location>
</feature>
<feature type="helix" evidence="13">
    <location>
        <begin position="156"/>
        <end position="170"/>
    </location>
</feature>
<feature type="helix" evidence="13">
    <location>
        <begin position="171"/>
        <end position="173"/>
    </location>
</feature>
<feature type="helix" evidence="12">
    <location>
        <begin position="176"/>
        <end position="178"/>
    </location>
</feature>
<feature type="turn" evidence="13">
    <location>
        <begin position="181"/>
        <end position="184"/>
    </location>
</feature>
<feature type="helix" evidence="13">
    <location>
        <begin position="185"/>
        <end position="199"/>
    </location>
</feature>
<feature type="helix" evidence="13">
    <location>
        <begin position="204"/>
        <end position="216"/>
    </location>
</feature>
<feature type="helix" evidence="13">
    <location>
        <begin position="227"/>
        <end position="239"/>
    </location>
</feature>
<feature type="helix" evidence="13">
    <location>
        <begin position="264"/>
        <end position="287"/>
    </location>
</feature>
<feature type="helix" evidence="13">
    <location>
        <begin position="290"/>
        <end position="292"/>
    </location>
</feature>
<feature type="helix" evidence="13">
    <location>
        <begin position="296"/>
        <end position="307"/>
    </location>
</feature>
<feature type="helix" evidence="13">
    <location>
        <begin position="314"/>
        <end position="326"/>
    </location>
</feature>
<gene>
    <name type="primary">MRP13</name>
    <name type="ordered locus">YGR084C</name>
</gene>
<protein>
    <recommendedName>
        <fullName evidence="9">Small ribosomal subunit protein mS27</fullName>
    </recommendedName>
    <alternativeName>
        <fullName>37S ribosomal protein MRP13, mitochondrial</fullName>
    </alternativeName>
    <alternativeName>
        <fullName evidence="8">Small ribosomal subunit protein mS44</fullName>
    </alternativeName>
    <alternativeName>
        <fullName>YmS-A</fullName>
    </alternativeName>
</protein>
<keyword id="KW-0002">3D-structure</keyword>
<keyword id="KW-0903">Direct protein sequencing</keyword>
<keyword id="KW-0496">Mitochondrion</keyword>
<keyword id="KW-1185">Reference proteome</keyword>
<keyword id="KW-0687">Ribonucleoprotein</keyword>
<keyword id="KW-0689">Ribosomal protein</keyword>
<keyword id="KW-0809">Transit peptide</keyword>
<comment type="function">
    <text evidence="10 11">Component of the mitochondrial ribosome (mitoribosome), a dedicated translation machinery responsible for the synthesis of mitochondrial genome-encoded proteins, including at least some of the essential transmembrane subunits of the mitochondrial respiratory chain. The mitoribosomes are attached to the mitochondrial inner membrane and translation products are cotranslationally integrated into the membrane.</text>
</comment>
<comment type="subunit">
    <text evidence="1 6 7">Component of the mitochondrial small ribosomal subunit (mt-SSU). Mature yeast 74S mitochondrial ribosomes consist of a small (37S) and a large (54S) subunit. The 37S small subunit contains a 15S ribosomal RNA (15S mt-rRNA) and 34 different proteins. The 54S large subunit contains a 21S rRNA (21S mt-rRNA) and 46 different proteins.</text>
</comment>
<comment type="subcellular location">
    <subcellularLocation>
        <location evidence="2 4">Mitochondrion</location>
    </subcellularLocation>
    <text evidence="5">Mitoribosomes are tethered to the mitochondrial inner membrane and spatially aligned with the membrane insertion machinery through two distinct membrane contact sites, formed by the 21S rRNA expansion segment 96-ES1 and the inner membrane protein MBA1.</text>
</comment>
<comment type="miscellaneous">
    <text evidence="3">Present with 16000 molecules/cell in log phase SD medium.</text>
</comment>
<comment type="similarity">
    <text evidence="9">Belongs to the mitochondrion-specific ribosomal protein mS27 family.</text>
</comment>
<comment type="sequence caution" evidence="9">
    <conflict type="frameshift">
        <sequence resource="EMBL-CDS" id="AAA34788"/>
    </conflict>
</comment>
<dbReference type="EMBL" id="M22109">
    <property type="protein sequence ID" value="AAA34788.1"/>
    <property type="status" value="ALT_FRAME"/>
    <property type="molecule type" value="Genomic_DNA"/>
</dbReference>
<dbReference type="EMBL" id="Z72869">
    <property type="protein sequence ID" value="CAA97086.1"/>
    <property type="molecule type" value="Genomic_DNA"/>
</dbReference>
<dbReference type="EMBL" id="BK006941">
    <property type="protein sequence ID" value="DAA08177.1"/>
    <property type="molecule type" value="Genomic_DNA"/>
</dbReference>
<dbReference type="PIR" id="S64379">
    <property type="entry name" value="R6BY13"/>
</dbReference>
<dbReference type="RefSeq" id="NP_011598.3">
    <property type="nucleotide sequence ID" value="NM_001181213.3"/>
</dbReference>
<dbReference type="PDB" id="5MRC">
    <property type="method" value="EM"/>
    <property type="resolution" value="3.25 A"/>
    <property type="chains" value="55=1-339"/>
</dbReference>
<dbReference type="PDB" id="5MRE">
    <property type="method" value="EM"/>
    <property type="resolution" value="3.75 A"/>
    <property type="chains" value="55=1-339"/>
</dbReference>
<dbReference type="PDB" id="5MRF">
    <property type="method" value="EM"/>
    <property type="resolution" value="4.97 A"/>
    <property type="chains" value="55=1-339"/>
</dbReference>
<dbReference type="PDB" id="8D8J">
    <property type="method" value="EM"/>
    <property type="resolution" value="3.80 A"/>
    <property type="chains" value="5=1-339"/>
</dbReference>
<dbReference type="PDB" id="8D8K">
    <property type="method" value="EM"/>
    <property type="resolution" value="3.13 A"/>
    <property type="chains" value="5=1-339"/>
</dbReference>
<dbReference type="PDB" id="8D8L">
    <property type="method" value="EM"/>
    <property type="resolution" value="2.60 A"/>
    <property type="chains" value="5=1-339"/>
</dbReference>
<dbReference type="PDB" id="8OM2">
    <property type="method" value="EM"/>
    <property type="resolution" value="2.57 A"/>
    <property type="chains" value="5=1-339"/>
</dbReference>
<dbReference type="PDB" id="8OM3">
    <property type="method" value="EM"/>
    <property type="resolution" value="2.87 A"/>
    <property type="chains" value="5=1-339"/>
</dbReference>
<dbReference type="PDB" id="8OM4">
    <property type="method" value="EM"/>
    <property type="resolution" value="2.32 A"/>
    <property type="chains" value="5=1-339"/>
</dbReference>
<dbReference type="PDBsum" id="5MRC"/>
<dbReference type="PDBsum" id="5MRE"/>
<dbReference type="PDBsum" id="5MRF"/>
<dbReference type="PDBsum" id="8D8J"/>
<dbReference type="PDBsum" id="8D8K"/>
<dbReference type="PDBsum" id="8D8L"/>
<dbReference type="PDBsum" id="8OM2"/>
<dbReference type="PDBsum" id="8OM3"/>
<dbReference type="PDBsum" id="8OM4"/>
<dbReference type="EMDB" id="EMD-16966"/>
<dbReference type="EMDB" id="EMD-16967"/>
<dbReference type="EMDB" id="EMD-16968"/>
<dbReference type="EMDB" id="EMD-27249"/>
<dbReference type="EMDB" id="EMD-27250"/>
<dbReference type="EMDB" id="EMD-27251"/>
<dbReference type="EMDB" id="EMD-3551"/>
<dbReference type="EMDB" id="EMD-3552"/>
<dbReference type="EMDB" id="EMD-3553"/>
<dbReference type="SMR" id="P12686"/>
<dbReference type="BioGRID" id="33326">
    <property type="interactions" value="130"/>
</dbReference>
<dbReference type="ComplexPortal" id="CPX-1603">
    <property type="entry name" value="37S mitochondrial small ribosomal subunit"/>
</dbReference>
<dbReference type="DIP" id="DIP-5380N"/>
<dbReference type="FunCoup" id="P12686">
    <property type="interactions" value="151"/>
</dbReference>
<dbReference type="IntAct" id="P12686">
    <property type="interactions" value="46"/>
</dbReference>
<dbReference type="MINT" id="P12686"/>
<dbReference type="STRING" id="4932.YGR084C"/>
<dbReference type="GlyGen" id="P12686">
    <property type="glycosylation" value="2 sites, 1 O-linked glycan (2 sites)"/>
</dbReference>
<dbReference type="iPTMnet" id="P12686"/>
<dbReference type="PaxDb" id="4932-YGR084C"/>
<dbReference type="PeptideAtlas" id="P12686"/>
<dbReference type="EnsemblFungi" id="YGR084C_mRNA">
    <property type="protein sequence ID" value="YGR084C"/>
    <property type="gene ID" value="YGR084C"/>
</dbReference>
<dbReference type="GeneID" id="852975"/>
<dbReference type="KEGG" id="sce:YGR084C"/>
<dbReference type="AGR" id="SGD:S000003316"/>
<dbReference type="SGD" id="S000003316">
    <property type="gene designation" value="MRP13"/>
</dbReference>
<dbReference type="VEuPathDB" id="FungiDB:YGR084C"/>
<dbReference type="eggNOG" id="ENOG502RYVU">
    <property type="taxonomic scope" value="Eukaryota"/>
</dbReference>
<dbReference type="HOGENOM" id="CLU_894829_0_0_1"/>
<dbReference type="InParanoid" id="P12686"/>
<dbReference type="OMA" id="YRPKNAN"/>
<dbReference type="OrthoDB" id="4061106at2759"/>
<dbReference type="BioCyc" id="YEAST:G3O-30796-MONOMER"/>
<dbReference type="BioGRID-ORCS" id="852975">
    <property type="hits" value="3 hits in 10 CRISPR screens"/>
</dbReference>
<dbReference type="PRO" id="PR:P12686"/>
<dbReference type="Proteomes" id="UP000002311">
    <property type="component" value="Chromosome VII"/>
</dbReference>
<dbReference type="RNAct" id="P12686">
    <property type="molecule type" value="protein"/>
</dbReference>
<dbReference type="GO" id="GO:0005743">
    <property type="term" value="C:mitochondrial inner membrane"/>
    <property type="evidence" value="ECO:0000303"/>
    <property type="project" value="ComplexPortal"/>
</dbReference>
<dbReference type="GO" id="GO:0005763">
    <property type="term" value="C:mitochondrial small ribosomal subunit"/>
    <property type="evidence" value="ECO:0000314"/>
    <property type="project" value="SGD"/>
</dbReference>
<dbReference type="GO" id="GO:0005739">
    <property type="term" value="C:mitochondrion"/>
    <property type="evidence" value="ECO:0007005"/>
    <property type="project" value="SGD"/>
</dbReference>
<dbReference type="GO" id="GO:0003735">
    <property type="term" value="F:structural constituent of ribosome"/>
    <property type="evidence" value="ECO:0000314"/>
    <property type="project" value="SGD"/>
</dbReference>
<dbReference type="GO" id="GO:0032543">
    <property type="term" value="P:mitochondrial translation"/>
    <property type="evidence" value="ECO:0000303"/>
    <property type="project" value="ComplexPortal"/>
</dbReference>
<dbReference type="CDD" id="cd23704">
    <property type="entry name" value="mS44"/>
    <property type="match status" value="1"/>
</dbReference>
<evidence type="ECO:0000269" key="1">
    <source>
    </source>
</evidence>
<evidence type="ECO:0000269" key="2">
    <source>
    </source>
</evidence>
<evidence type="ECO:0000269" key="3">
    <source>
    </source>
</evidence>
<evidence type="ECO:0000269" key="4">
    <source>
    </source>
</evidence>
<evidence type="ECO:0000269" key="5">
    <source>
    </source>
</evidence>
<evidence type="ECO:0000269" key="6">
    <source>
    </source>
</evidence>
<evidence type="ECO:0000269" key="7">
    <source>
    </source>
</evidence>
<evidence type="ECO:0000303" key="8">
    <source>
    </source>
</evidence>
<evidence type="ECO:0000305" key="9"/>
<evidence type="ECO:0000305" key="10">
    <source>
    </source>
</evidence>
<evidence type="ECO:0000305" key="11">
    <source>
    </source>
</evidence>
<evidence type="ECO:0007829" key="12">
    <source>
        <dbReference type="PDB" id="8D8K"/>
    </source>
</evidence>
<evidence type="ECO:0007829" key="13">
    <source>
        <dbReference type="PDB" id="8D8L"/>
    </source>
</evidence>
<organism>
    <name type="scientific">Saccharomyces cerevisiae (strain ATCC 204508 / S288c)</name>
    <name type="common">Baker's yeast</name>
    <dbReference type="NCBI Taxonomy" id="559292"/>
    <lineage>
        <taxon>Eukaryota</taxon>
        <taxon>Fungi</taxon>
        <taxon>Dikarya</taxon>
        <taxon>Ascomycota</taxon>
        <taxon>Saccharomycotina</taxon>
        <taxon>Saccharomycetes</taxon>
        <taxon>Saccharomycetales</taxon>
        <taxon>Saccharomycetaceae</taxon>
        <taxon>Saccharomyces</taxon>
    </lineage>
</organism>